<reference key="1">
    <citation type="journal article" date="1997" name="Nature">
        <title>The complete genome sequence of the hyperthermophilic, sulphate-reducing archaeon Archaeoglobus fulgidus.</title>
        <authorList>
            <person name="Klenk H.-P."/>
            <person name="Clayton R.A."/>
            <person name="Tomb J.-F."/>
            <person name="White O."/>
            <person name="Nelson K.E."/>
            <person name="Ketchum K.A."/>
            <person name="Dodson R.J."/>
            <person name="Gwinn M.L."/>
            <person name="Hickey E.K."/>
            <person name="Peterson J.D."/>
            <person name="Richardson D.L."/>
            <person name="Kerlavage A.R."/>
            <person name="Graham D.E."/>
            <person name="Kyrpides N.C."/>
            <person name="Fleischmann R.D."/>
            <person name="Quackenbush J."/>
            <person name="Lee N.H."/>
            <person name="Sutton G.G."/>
            <person name="Gill S.R."/>
            <person name="Kirkness E.F."/>
            <person name="Dougherty B.A."/>
            <person name="McKenney K."/>
            <person name="Adams M.D."/>
            <person name="Loftus B.J."/>
            <person name="Peterson S.N."/>
            <person name="Reich C.I."/>
            <person name="McNeil L.K."/>
            <person name="Badger J.H."/>
            <person name="Glodek A."/>
            <person name="Zhou L."/>
            <person name="Overbeek R."/>
            <person name="Gocayne J.D."/>
            <person name="Weidman J.F."/>
            <person name="McDonald L.A."/>
            <person name="Utterback T.R."/>
            <person name="Cotton M.D."/>
            <person name="Spriggs T."/>
            <person name="Artiach P."/>
            <person name="Kaine B.P."/>
            <person name="Sykes S.M."/>
            <person name="Sadow P.W."/>
            <person name="D'Andrea K.P."/>
            <person name="Bowman C."/>
            <person name="Fujii C."/>
            <person name="Garland S.A."/>
            <person name="Mason T.M."/>
            <person name="Olsen G.J."/>
            <person name="Fraser C.M."/>
            <person name="Smith H.O."/>
            <person name="Woese C.R."/>
            <person name="Venter J.C."/>
        </authorList>
    </citation>
    <scope>NUCLEOTIDE SEQUENCE [LARGE SCALE GENOMIC DNA]</scope>
    <source>
        <strain>ATCC 49558 / DSM 4304 / JCM 9628 / NBRC 100126 / VC-16</strain>
    </source>
</reference>
<protein>
    <recommendedName>
        <fullName>Uncharacterized protein AF_1865</fullName>
    </recommendedName>
</protein>
<accession>O28414</accession>
<proteinExistence type="predicted"/>
<dbReference type="EMBL" id="AE000782">
    <property type="protein sequence ID" value="AAB89387.1"/>
    <property type="molecule type" value="Genomic_DNA"/>
</dbReference>
<dbReference type="PIR" id="H69482">
    <property type="entry name" value="H69482"/>
</dbReference>
<dbReference type="RefSeq" id="WP_010879358.1">
    <property type="nucleotide sequence ID" value="NC_000917.1"/>
</dbReference>
<dbReference type="STRING" id="224325.AF_1865"/>
<dbReference type="PaxDb" id="224325-AF_1865"/>
<dbReference type="EnsemblBacteria" id="AAB89387">
    <property type="protein sequence ID" value="AAB89387"/>
    <property type="gene ID" value="AF_1865"/>
</dbReference>
<dbReference type="KEGG" id="afu:AF_1865"/>
<dbReference type="eggNOG" id="arCOG01449">
    <property type="taxonomic scope" value="Archaea"/>
</dbReference>
<dbReference type="HOGENOM" id="CLU_835815_0_0_2"/>
<dbReference type="OrthoDB" id="102168at2157"/>
<dbReference type="Proteomes" id="UP000002199">
    <property type="component" value="Chromosome"/>
</dbReference>
<organism>
    <name type="scientific">Archaeoglobus fulgidus (strain ATCC 49558 / DSM 4304 / JCM 9628 / NBRC 100126 / VC-16)</name>
    <dbReference type="NCBI Taxonomy" id="224325"/>
    <lineage>
        <taxon>Archaea</taxon>
        <taxon>Methanobacteriati</taxon>
        <taxon>Methanobacteriota</taxon>
        <taxon>Archaeoglobi</taxon>
        <taxon>Archaeoglobales</taxon>
        <taxon>Archaeoglobaceae</taxon>
        <taxon>Archaeoglobus</taxon>
    </lineage>
</organism>
<gene>
    <name type="ordered locus">AF_1865</name>
</gene>
<keyword id="KW-1185">Reference proteome</keyword>
<sequence>MGVYHISGVGFRPGAVTVPLTAVYTLQIAQALGIEEAKEFFKYSSEAEKKGSYEMTKGIPEVLVVFTSRDVIEGRKKLEYKSNWFSLSGGSEEKVEKPIVKYLKKLFRHIEKNFNLEFCLKKFYLVKVDHQNFDDCFEKIGVILRALKDKEVWGNMIGGTNQINLAMLTAGAYTATISKYYYLFQNDVALMEPEWIDKPSNKNIRQATIEILKKWQELPIFNLEMGSIMKDISNLFGGRGFVNIREVERILENYGLGKQFLTKFRGRILEFEEDKVSKGIMFDKIVNLWNLISDVDVRNVLREWKDTGVIREVDINEIRCD</sequence>
<name>Y1865_ARCFU</name>
<feature type="chain" id="PRO_0000128068" description="Uncharacterized protein AF_1865">
    <location>
        <begin position="1"/>
        <end position="321"/>
    </location>
</feature>